<reference key="1">
    <citation type="journal article" date="2000" name="Hum. Mol. Genet.">
        <title>The Schizosaccharomyces pombe protein Yab8p and a novel factor, Yip1p, share structural and functional similarity with the spinal muscular atrophy-associated proteins SMN and SIP1.</title>
        <authorList>
            <person name="Hannus S."/>
            <person name="Buehler D."/>
            <person name="Romano M."/>
            <person name="Seraphin B."/>
            <person name="Fischer U."/>
        </authorList>
    </citation>
    <scope>NUCLEOTIDE SEQUENCE [MRNA]</scope>
    <scope>INTERACTION WITH SMN1</scope>
    <scope>SUBCELLULAR LOCATION</scope>
    <source>
        <strain>972 / ATCC 24843</strain>
    </source>
</reference>
<reference key="2">
    <citation type="journal article" date="2002" name="Nature">
        <title>The genome sequence of Schizosaccharomyces pombe.</title>
        <authorList>
            <person name="Wood V."/>
            <person name="Gwilliam R."/>
            <person name="Rajandream M.A."/>
            <person name="Lyne M.H."/>
            <person name="Lyne R."/>
            <person name="Stewart A."/>
            <person name="Sgouros J.G."/>
            <person name="Peat N."/>
            <person name="Hayles J."/>
            <person name="Baker S.G."/>
            <person name="Basham D."/>
            <person name="Bowman S."/>
            <person name="Brooks K."/>
            <person name="Brown D."/>
            <person name="Brown S."/>
            <person name="Chillingworth T."/>
            <person name="Churcher C.M."/>
            <person name="Collins M."/>
            <person name="Connor R."/>
            <person name="Cronin A."/>
            <person name="Davis P."/>
            <person name="Feltwell T."/>
            <person name="Fraser A."/>
            <person name="Gentles S."/>
            <person name="Goble A."/>
            <person name="Hamlin N."/>
            <person name="Harris D.E."/>
            <person name="Hidalgo J."/>
            <person name="Hodgson G."/>
            <person name="Holroyd S."/>
            <person name="Hornsby T."/>
            <person name="Howarth S."/>
            <person name="Huckle E.J."/>
            <person name="Hunt S."/>
            <person name="Jagels K."/>
            <person name="James K.D."/>
            <person name="Jones L."/>
            <person name="Jones M."/>
            <person name="Leather S."/>
            <person name="McDonald S."/>
            <person name="McLean J."/>
            <person name="Mooney P."/>
            <person name="Moule S."/>
            <person name="Mungall K.L."/>
            <person name="Murphy L.D."/>
            <person name="Niblett D."/>
            <person name="Odell C."/>
            <person name="Oliver K."/>
            <person name="O'Neil S."/>
            <person name="Pearson D."/>
            <person name="Quail M.A."/>
            <person name="Rabbinowitsch E."/>
            <person name="Rutherford K.M."/>
            <person name="Rutter S."/>
            <person name="Saunders D."/>
            <person name="Seeger K."/>
            <person name="Sharp S."/>
            <person name="Skelton J."/>
            <person name="Simmonds M.N."/>
            <person name="Squares R."/>
            <person name="Squares S."/>
            <person name="Stevens K."/>
            <person name="Taylor K."/>
            <person name="Taylor R.G."/>
            <person name="Tivey A."/>
            <person name="Walsh S.V."/>
            <person name="Warren T."/>
            <person name="Whitehead S."/>
            <person name="Woodward J.R."/>
            <person name="Volckaert G."/>
            <person name="Aert R."/>
            <person name="Robben J."/>
            <person name="Grymonprez B."/>
            <person name="Weltjens I."/>
            <person name="Vanstreels E."/>
            <person name="Rieger M."/>
            <person name="Schaefer M."/>
            <person name="Mueller-Auer S."/>
            <person name="Gabel C."/>
            <person name="Fuchs M."/>
            <person name="Duesterhoeft A."/>
            <person name="Fritzc C."/>
            <person name="Holzer E."/>
            <person name="Moestl D."/>
            <person name="Hilbert H."/>
            <person name="Borzym K."/>
            <person name="Langer I."/>
            <person name="Beck A."/>
            <person name="Lehrach H."/>
            <person name="Reinhardt R."/>
            <person name="Pohl T.M."/>
            <person name="Eger P."/>
            <person name="Zimmermann W."/>
            <person name="Wedler H."/>
            <person name="Wambutt R."/>
            <person name="Purnelle B."/>
            <person name="Goffeau A."/>
            <person name="Cadieu E."/>
            <person name="Dreano S."/>
            <person name="Gloux S."/>
            <person name="Lelaure V."/>
            <person name="Mottier S."/>
            <person name="Galibert F."/>
            <person name="Aves S.J."/>
            <person name="Xiang Z."/>
            <person name="Hunt C."/>
            <person name="Moore K."/>
            <person name="Hurst S.M."/>
            <person name="Lucas M."/>
            <person name="Rochet M."/>
            <person name="Gaillardin C."/>
            <person name="Tallada V.A."/>
            <person name="Garzon A."/>
            <person name="Thode G."/>
            <person name="Daga R.R."/>
            <person name="Cruzado L."/>
            <person name="Jimenez J."/>
            <person name="Sanchez M."/>
            <person name="del Rey F."/>
            <person name="Benito J."/>
            <person name="Dominguez A."/>
            <person name="Revuelta J.L."/>
            <person name="Moreno S."/>
            <person name="Armstrong J."/>
            <person name="Forsburg S.L."/>
            <person name="Cerutti L."/>
            <person name="Lowe T."/>
            <person name="McCombie W.R."/>
            <person name="Paulsen I."/>
            <person name="Potashkin J."/>
            <person name="Shpakovski G.V."/>
            <person name="Ussery D."/>
            <person name="Barrell B.G."/>
            <person name="Nurse P."/>
        </authorList>
    </citation>
    <scope>NUCLEOTIDE SEQUENCE [LARGE SCALE GENOMIC DNA]</scope>
    <source>
        <strain>972 / ATCC 24843</strain>
    </source>
</reference>
<reference key="3">
    <citation type="journal article" date="2008" name="J. Proteome Res.">
        <title>Phosphoproteome analysis of fission yeast.</title>
        <authorList>
            <person name="Wilson-Grady J.T."/>
            <person name="Villen J."/>
            <person name="Gygi S.P."/>
        </authorList>
    </citation>
    <scope>PHOSPHORYLATION [LARGE SCALE ANALYSIS] AT SER-117 AND SER-118</scope>
    <scope>IDENTIFICATION BY MASS SPECTROMETRY</scope>
</reference>
<reference key="4">
    <citation type="journal article" date="2015" name="J. Biol. Chem.">
        <title>Oligomeric Properties of Survival Motor Neuron.Gemin2 Complexes.</title>
        <authorList>
            <person name="Gupta K."/>
            <person name="Martin R."/>
            <person name="Sharp R."/>
            <person name="Sarachan K.L."/>
            <person name="Ninan N.S."/>
            <person name="Van Duyne G.D."/>
        </authorList>
    </citation>
    <scope>INTERACTION WITH SMN1</scope>
</reference>
<reference key="5">
    <citation type="journal article" date="2015" name="PLoS ONE">
        <title>Genetic Interactions between the Members of the SMN-Gemins Complex in Drosophila.</title>
        <authorList>
            <person name="Borg R.M."/>
            <person name="Bordonne R."/>
            <person name="Vassallo N."/>
            <person name="Cauchi R.J."/>
        </authorList>
    </citation>
    <scope>FUNCTION</scope>
</reference>
<reference key="6">
    <citation type="journal article" date="2021" name="Nucleic Acids Res.">
        <title>Identification and structural analysis of the Schizosaccharomyces pombe SMN complex.</title>
        <authorList>
            <person name="Veepaschit J."/>
            <person name="Viswanathan A."/>
            <person name="Bordonne R."/>
            <person name="Grimm C."/>
            <person name="Fischer U."/>
        </authorList>
    </citation>
    <scope>FUNCTION</scope>
    <scope>IDENTIFICATION IN THE CORE SMN COMPLEX</scope>
    <scope>INTERACTION WITH SMN1</scope>
</reference>
<name>GEMI2_SCHPO</name>
<gene>
    <name type="primary">yip11</name>
    <name evidence="11" type="synonym">gem2</name>
    <name evidence="9" type="synonym">gemin2</name>
    <name evidence="8" type="synonym">yip1</name>
    <name type="synonym">yip1-a</name>
    <name evidence="11" type="ORF">SPAC19B12.12c</name>
</gene>
<sequence>MPSKRKRNPLQYQTSGSLDEETNQRSAFPQIDNNSASESLEYDIPLDGLDYLATVREEARKLVPFVAARREPETRETIPLRKLEIEAGKKSFDPFLRYLLNIIDKEGERLEQYMESSSLDASILPKNLQQWRVYIEHKAPCWAILAVVDLATVLEILESLSSWLEKDAIDLQSQWIFCFCYKLPELLNGEDISTLRSVLKSLRSTHTSFPALQMSASALQAVLVYRYGQKDLFQT</sequence>
<accession>P0CU08</accession>
<accession>Q9P347</accession>
<protein>
    <recommendedName>
        <fullName evidence="11">SMN complex subunit yip11/gem2</fullName>
    </recommendedName>
    <alternativeName>
        <fullName evidence="10">Gem-associated protein 2</fullName>
    </alternativeName>
    <alternativeName>
        <fullName evidence="10">Survival of motor neuron protein-interacting protein yip11</fullName>
        <shortName evidence="10">SMN-interacting protein yip11</shortName>
    </alternativeName>
    <alternativeName>
        <fullName>Yab8-interacting protein 1-a</fullName>
    </alternativeName>
</protein>
<organism>
    <name type="scientific">Schizosaccharomyces pombe (strain 972 / ATCC 24843)</name>
    <name type="common">Fission yeast</name>
    <dbReference type="NCBI Taxonomy" id="284812"/>
    <lineage>
        <taxon>Eukaryota</taxon>
        <taxon>Fungi</taxon>
        <taxon>Dikarya</taxon>
        <taxon>Ascomycota</taxon>
        <taxon>Taphrinomycotina</taxon>
        <taxon>Schizosaccharomycetes</taxon>
        <taxon>Schizosaccharomycetales</taxon>
        <taxon>Schizosaccharomycetaceae</taxon>
        <taxon>Schizosaccharomyces</taxon>
    </lineage>
</organism>
<dbReference type="EMBL" id="AJ252269">
    <property type="protein sequence ID" value="CAB88094.1"/>
    <property type="molecule type" value="mRNA"/>
</dbReference>
<dbReference type="EMBL" id="CU329670">
    <property type="protein sequence ID" value="CAC00560.1"/>
    <property type="molecule type" value="Genomic_DNA"/>
</dbReference>
<dbReference type="RefSeq" id="NP_001018218.1">
    <property type="nucleotide sequence ID" value="NM_001018698.2"/>
</dbReference>
<dbReference type="RefSeq" id="NP_594775.1">
    <property type="nucleotide sequence ID" value="NM_001020202.2"/>
</dbReference>
<dbReference type="SASBDB" id="P0CU08"/>
<dbReference type="SMR" id="P0CU08"/>
<dbReference type="ComplexPortal" id="CPX-25739">
    <property type="entry name" value="Survival motor neuron complex"/>
</dbReference>
<dbReference type="FunCoup" id="P0CU08">
    <property type="interactions" value="2"/>
</dbReference>
<dbReference type="STRING" id="284812.P0CU08"/>
<dbReference type="iPTMnet" id="P0CU08"/>
<dbReference type="PaxDb" id="4896-SPAC19B12.12c.1"/>
<dbReference type="EnsemblFungi" id="SPAC19B12.12c.1">
    <property type="protein sequence ID" value="SPAC19B12.12c.1:pep"/>
    <property type="gene ID" value="SPAC19B12.12c"/>
</dbReference>
<dbReference type="EnsemblFungi" id="SPAPB17E12.02.1">
    <property type="protein sequence ID" value="SPAPB17E12.02.1:pep"/>
    <property type="gene ID" value="SPAPB17E12.02"/>
</dbReference>
<dbReference type="GeneID" id="2542486"/>
<dbReference type="GeneID" id="3361408"/>
<dbReference type="KEGG" id="spo:2542486"/>
<dbReference type="KEGG" id="spo:3361408"/>
<dbReference type="PomBase" id="SPAC19B12.12c">
    <property type="gene designation" value="yip11"/>
</dbReference>
<dbReference type="VEuPathDB" id="FungiDB:SPAC19B12.12c"/>
<dbReference type="VEuPathDB" id="FungiDB:SPAPB17E12.02"/>
<dbReference type="eggNOG" id="ENOG502SCAA">
    <property type="taxonomic scope" value="Eukaryota"/>
</dbReference>
<dbReference type="InParanoid" id="P0CU08"/>
<dbReference type="OMA" id="DIFENCA"/>
<dbReference type="PRO" id="PR:P0CU08"/>
<dbReference type="Proteomes" id="UP000002485">
    <property type="component" value="Chromosome I"/>
</dbReference>
<dbReference type="GO" id="GO:0005829">
    <property type="term" value="C:cytosol"/>
    <property type="evidence" value="ECO:0007005"/>
    <property type="project" value="PomBase"/>
</dbReference>
<dbReference type="GO" id="GO:0005634">
    <property type="term" value="C:nucleus"/>
    <property type="evidence" value="ECO:0007005"/>
    <property type="project" value="PomBase"/>
</dbReference>
<dbReference type="GO" id="GO:0032797">
    <property type="term" value="C:SMN complex"/>
    <property type="evidence" value="ECO:0000314"/>
    <property type="project" value="UniProtKB"/>
</dbReference>
<dbReference type="GO" id="GO:0000387">
    <property type="term" value="P:spliceosomal snRNP assembly"/>
    <property type="evidence" value="ECO:0000318"/>
    <property type="project" value="GO_Central"/>
</dbReference>
<dbReference type="Gene3D" id="1.20.58.1070">
    <property type="match status" value="1"/>
</dbReference>
<dbReference type="InterPro" id="IPR035426">
    <property type="entry name" value="Gemin2/Brr1"/>
</dbReference>
<dbReference type="PANTHER" id="PTHR12794:SF0">
    <property type="entry name" value="GEM-ASSOCIATED PROTEIN 2"/>
    <property type="match status" value="1"/>
</dbReference>
<dbReference type="PANTHER" id="PTHR12794">
    <property type="entry name" value="GEMIN2"/>
    <property type="match status" value="1"/>
</dbReference>
<dbReference type="Pfam" id="PF04938">
    <property type="entry name" value="SIP1"/>
    <property type="match status" value="1"/>
</dbReference>
<feature type="chain" id="PRO_0000237700" description="SMN complex subunit yip11/gem2">
    <location>
        <begin position="1"/>
        <end position="235"/>
    </location>
</feature>
<feature type="region of interest" description="Disordered" evidence="2">
    <location>
        <begin position="1"/>
        <end position="34"/>
    </location>
</feature>
<feature type="compositionally biased region" description="Polar residues" evidence="2">
    <location>
        <begin position="24"/>
        <end position="34"/>
    </location>
</feature>
<feature type="modified residue" description="Phosphoserine" evidence="4">
    <location>
        <position position="117"/>
    </location>
</feature>
<feature type="modified residue" description="Phosphoserine" evidence="4">
    <location>
        <position position="118"/>
    </location>
</feature>
<proteinExistence type="evidence at protein level"/>
<keyword id="KW-0507">mRNA processing</keyword>
<keyword id="KW-0508">mRNA splicing</keyword>
<keyword id="KW-0539">Nucleus</keyword>
<keyword id="KW-0597">Phosphoprotein</keyword>
<keyword id="KW-1185">Reference proteome</keyword>
<evidence type="ECO:0000250" key="1">
    <source>
        <dbReference type="UniProtKB" id="O14893"/>
    </source>
</evidence>
<evidence type="ECO:0000256" key="2">
    <source>
        <dbReference type="SAM" id="MobiDB-lite"/>
    </source>
</evidence>
<evidence type="ECO:0000269" key="3">
    <source>
    </source>
</evidence>
<evidence type="ECO:0000269" key="4">
    <source>
    </source>
</evidence>
<evidence type="ECO:0000269" key="5">
    <source>
    </source>
</evidence>
<evidence type="ECO:0000269" key="6">
    <source>
    </source>
</evidence>
<evidence type="ECO:0000269" key="7">
    <source>
    </source>
</evidence>
<evidence type="ECO:0000303" key="8">
    <source>
    </source>
</evidence>
<evidence type="ECO:0000303" key="9">
    <source>
    </source>
</evidence>
<evidence type="ECO:0000305" key="10"/>
<evidence type="ECO:0000312" key="11">
    <source>
        <dbReference type="PomBase" id="SPAC19B12.12c"/>
    </source>
</evidence>
<comment type="function">
    <text evidence="1 6 7">The SMN complex catalyzes the assembly of small nuclear ribonucleoproteins (snRNPs), the building blocks of the spliceosome, and thereby plays an important role in the splicing of cellular pre-mRNAs (PubMed:33754639). Most spliceosomal snRNPs contain a common set of Sm proteins smb1, smd1, smd2, smd3, sme1, smf1 and smg1 that assemble in a heptameric protein ring on the Sm site of the small nuclear RNA to form the core snRNP (By similarity). In the cytosol, the Sm proteins smd1, smd2, sme1, smf1 and smg1 (5Sm) are trapped in an inactive 6S pICln-Sm complex by the chaperone saf5 (By similarity). To complete assembly of core snRNPs, the SMN complex accepts 5Sm from saf5 (By similarity). Binding of snRNA inside 5Sm ultimately triggers eviction of the SMN complex, thereby allowing binding of smd3 and smb1 to complete assembly of the core snRNP (By similarity). Within the SMN complex, yip11/gem2 constrains the conformation of 5Sm, thereby promoting 5Sm binding to snRNA containing the snRNP code (a nonameric Sm site and a 3'-adjacent stem-loop), thus preventing progression of assembly until a cognate substrate is bound (PubMed:33754639).</text>
</comment>
<comment type="subunit">
    <text evidence="3 5 7">Part of the core SMN complex at least composed of smn1, yip11/gem2, gem6, gem7 and gem8 (PubMed:33754639). Interacts with smn1; the interaction is direct (PubMed:10749973, PubMed:26092730, PubMed:33754639).</text>
</comment>
<comment type="subcellular location">
    <subcellularLocation>
        <location evidence="3">Nucleus</location>
    </subcellularLocation>
</comment>
<comment type="similarity">
    <text evidence="10">Belongs to the gemin-2 family.</text>
</comment>